<organismHost>
    <name type="scientific">Lactococcus lactis</name>
    <dbReference type="NCBI Taxonomy" id="1358"/>
</organismHost>
<dbReference type="EMBL" id="AF011378">
    <property type="protein sequence ID" value="AAB70048.1"/>
    <property type="molecule type" value="Genomic_DNA"/>
</dbReference>
<dbReference type="RefSeq" id="NP_044955.1">
    <property type="nucleotide sequence ID" value="NC_001835.1"/>
</dbReference>
<dbReference type="SMR" id="O21877"/>
<dbReference type="GeneID" id="1261275"/>
<dbReference type="KEGG" id="vg:1261275"/>
<dbReference type="Proteomes" id="UP000000839">
    <property type="component" value="Genome"/>
</dbReference>
<dbReference type="GO" id="GO:0044423">
    <property type="term" value="C:virion component"/>
    <property type="evidence" value="ECO:0007669"/>
    <property type="project" value="UniProtKB-KW"/>
</dbReference>
<dbReference type="GO" id="GO:0099001">
    <property type="term" value="P:symbiont genome ejection through host cell envelope, long flexible tail mechanism"/>
    <property type="evidence" value="ECO:0007669"/>
    <property type="project" value="UniProtKB-KW"/>
</dbReference>
<feature type="chain" id="PRO_0000438261" description="Probable head completion protein 2">
    <location>
        <begin position="1"/>
        <end position="56"/>
    </location>
</feature>
<keyword id="KW-1185">Reference proteome</keyword>
<keyword id="KW-0118">Viral capsid assembly</keyword>
<keyword id="KW-1171">Viral genome ejection through host cell envelope</keyword>
<keyword id="KW-1243">Viral long flexible tail ejection system</keyword>
<keyword id="KW-1162">Viral penetration into host cytoplasm</keyword>
<keyword id="KW-1188">Viral release from host cell</keyword>
<keyword id="KW-0946">Virion</keyword>
<keyword id="KW-1160">Virus entry into host cell</keyword>
<sequence>MEFDSYIDWYNNLLTMPLNDVILGVKDTIEDKTVYLSLSDSKVIKMDNTSFVMGYY</sequence>
<protein>
    <recommendedName>
        <fullName evidence="1">Probable head completion protein 2</fullName>
    </recommendedName>
    <alternativeName>
        <fullName>Connector protein gp9</fullName>
    </alternativeName>
    <alternativeName>
        <fullName evidence="2">Gene product 9</fullName>
        <shortName evidence="2">gp9</shortName>
    </alternativeName>
    <alternativeName>
        <fullName evidence="1">Putative stopper protein gp9</fullName>
    </alternativeName>
    <alternativeName>
        <fullName>Stopper protein gp9</fullName>
    </alternativeName>
</protein>
<name>HCP2_BPLSK</name>
<organism>
    <name type="scientific">Lactococcus phage SK1</name>
    <name type="common">Lactococcus lactis bacteriophage SK1</name>
    <dbReference type="NCBI Taxonomy" id="2905675"/>
    <lineage>
        <taxon>Viruses</taxon>
        <taxon>Duplodnaviria</taxon>
        <taxon>Heunggongvirae</taxon>
        <taxon>Uroviricota</taxon>
        <taxon>Caudoviricetes</taxon>
        <taxon>Skunavirus</taxon>
        <taxon>Skunavirus sk1</taxon>
    </lineage>
</organism>
<reference key="1">
    <citation type="journal article" date="1997" name="Mol. Microbiol.">
        <title>Analysis of the DNA sequence, gene expression, origin of replication and modular structure of the Lactococcus lactis lytic bacteriophage sk1.</title>
        <authorList>
            <person name="Chandry P.S."/>
            <person name="Moore S.C."/>
            <person name="Boyce J.D."/>
            <person name="Davidson B.E."/>
            <person name="Hillier A.J."/>
        </authorList>
    </citation>
    <scope>NUCLEOTIDE SEQUENCE [LARGE SCALE GENOMIC DNA]</scope>
</reference>
<proteinExistence type="inferred from homology"/>
<evidence type="ECO:0000250" key="1">
    <source>
        <dbReference type="UniProtKB" id="D3WAC8"/>
    </source>
</evidence>
<evidence type="ECO:0000305" key="2"/>
<comment type="function">
    <text evidence="1">Probably functions as a stopper that is part of the head-tail connector and that locks the viral DNA in the capsid. During assembly, functions as a docking platform which the preassembled tail can bind to. Plays a role in morphogenesis of the virion capsid after genome packaging.</text>
</comment>
<comment type="subcellular location">
    <subcellularLocation>
        <location evidence="1">Virion</location>
    </subcellularLocation>
    <text evidence="1">Part of the connector between the portal and the tail.</text>
</comment>
<comment type="similarity">
    <text evidence="2">Belongs to the skunalikevirus head completion protein 2 family.</text>
</comment>
<accession>O21877</accession>